<evidence type="ECO:0000255" key="1">
    <source>
        <dbReference type="PROSITE-ProRule" id="PRU00198"/>
    </source>
</evidence>
<evidence type="ECO:0000269" key="2">
    <source>
    </source>
</evidence>
<evidence type="ECO:0000269" key="3">
    <source>
    </source>
</evidence>
<evidence type="ECO:0000269" key="4">
    <source>
    </source>
</evidence>
<evidence type="ECO:0000269" key="5">
    <source>
    </source>
</evidence>
<evidence type="ECO:0000269" key="6">
    <source>
    </source>
</evidence>
<evidence type="ECO:0000269" key="7">
    <source>
    </source>
</evidence>
<evidence type="ECO:0000269" key="8">
    <source>
    </source>
</evidence>
<evidence type="ECO:0000305" key="9"/>
<evidence type="ECO:0007829" key="10">
    <source>
        <dbReference type="PDB" id="6M37"/>
    </source>
</evidence>
<feature type="chain" id="PRO_0000194185" description="Anti-sigma-B factor antagonist">
    <location>
        <begin position="1"/>
        <end position="109"/>
    </location>
</feature>
<feature type="domain" description="STAS" evidence="1">
    <location>
        <begin position="3"/>
        <end position="109"/>
    </location>
</feature>
<feature type="modified residue" description="Phosphoserine" evidence="4">
    <location>
        <position position="52"/>
    </location>
</feature>
<feature type="modified residue" description="Phosphoserine" evidence="4">
    <location>
        <position position="56"/>
    </location>
</feature>
<feature type="modified residue" description="Phosphothreonine" evidence="4">
    <location>
        <position position="57"/>
    </location>
</feature>
<feature type="mutagenesis site" description="Loss of phosphorylation. Interacts strongly with RsbW." evidence="8">
    <original>S</original>
    <variation>A</variation>
    <location>
        <position position="56"/>
    </location>
</feature>
<feature type="mutagenesis site" description="No interaction with RsbW." evidence="8">
    <original>S</original>
    <variation>D</variation>
    <location>
        <position position="56"/>
    </location>
</feature>
<feature type="strand" evidence="10">
    <location>
        <begin position="3"/>
        <end position="10"/>
    </location>
</feature>
<feature type="strand" evidence="10">
    <location>
        <begin position="13"/>
        <end position="23"/>
    </location>
</feature>
<feature type="turn" evidence="10">
    <location>
        <begin position="24"/>
        <end position="26"/>
    </location>
</feature>
<feature type="helix" evidence="10">
    <location>
        <begin position="27"/>
        <end position="39"/>
    </location>
</feature>
<feature type="strand" evidence="10">
    <location>
        <begin position="44"/>
        <end position="54"/>
    </location>
</feature>
<feature type="helix" evidence="10">
    <location>
        <begin position="56"/>
        <end position="71"/>
    </location>
</feature>
<feature type="strand" evidence="10">
    <location>
        <begin position="76"/>
        <end position="79"/>
    </location>
</feature>
<feature type="helix" evidence="10">
    <location>
        <begin position="83"/>
        <end position="91"/>
    </location>
</feature>
<feature type="turn" evidence="10">
    <location>
        <begin position="95"/>
        <end position="97"/>
    </location>
</feature>
<feature type="strand" evidence="10">
    <location>
        <begin position="98"/>
        <end position="100"/>
    </location>
</feature>
<comment type="function">
    <text evidence="3 5 6 7">Positive regulator of sigma-B activity. Non-phosphorylated RsbV binds to RsbW, preventing its association with sigma-B. When phosphorylated, releases RsbW, which is then free to complex with and inactivate sigma-B.</text>
</comment>
<comment type="subunit">
    <text evidence="2 9">Monomer (Probable). In stressed cells, forms a complex with RsbW. The predominant form of this complex has a stoichiometry of 2:2 (one dimer of RsbW is bound by two monomers of RsbV). Binds to RsbW in the presence of low levels of ATP or under conditions of energy or environmental stress (through dephosphorylation by RsbP or RsbU).</text>
</comment>
<comment type="PTM">
    <text evidence="4">Phosphorylated by RsbW on a serine residue. Dephosphorylated by RsbP or RsbU.</text>
</comment>
<comment type="similarity">
    <text evidence="9">Belongs to the anti-sigma-factor antagonist family.</text>
</comment>
<protein>
    <recommendedName>
        <fullName>Anti-sigma-B factor antagonist</fullName>
    </recommendedName>
    <alternativeName>
        <fullName>Anti-anti-sigma-B factor</fullName>
    </alternativeName>
</protein>
<reference key="1">
    <citation type="journal article" date="1990" name="J. Bacteriol.">
        <title>Similar organization of the sigB and spoIIA operons encoding alternate sigma factors of Bacillus subtilis RNA polymerase.</title>
        <authorList>
            <person name="Kalman S."/>
            <person name="Duncan M.L."/>
            <person name="Thomas S.M."/>
            <person name="Price C.W."/>
        </authorList>
    </citation>
    <scope>NUCLEOTIDE SEQUENCE [GENOMIC DNA]</scope>
    <source>
        <strain>168</strain>
    </source>
</reference>
<reference key="2">
    <citation type="journal article" date="1987" name="J. Bacteriol.">
        <title>Gene encoding the 37,000-dalton minor sigma factor of Bacillus subtilis RNA polymerase: isolation, nucleotide sequence, chromosomal locus, and cryptic function.</title>
        <authorList>
            <person name="Duncan M.L."/>
            <person name="Kalman S.S."/>
            <person name="Thomas S.M."/>
            <person name="Price C.W."/>
        </authorList>
    </citation>
    <scope>NUCLEOTIDE SEQUENCE [GENOMIC DNA]</scope>
    <source>
        <strain>168</strain>
    </source>
</reference>
<reference key="3">
    <citation type="submission" date="1997-03" db="EMBL/GenBank/DDBJ databases">
        <title>A 148 kbp sequence of the region between 35 and 47 degree of the Bacillus subtilis genome.</title>
        <authorList>
            <person name="Kasahara Y."/>
            <person name="Nakai S."/>
            <person name="Lee S."/>
            <person name="Sadaie Y."/>
            <person name="Ogasawara N."/>
        </authorList>
    </citation>
    <scope>NUCLEOTIDE SEQUENCE [GENOMIC DNA]</scope>
    <source>
        <strain>168</strain>
    </source>
</reference>
<reference key="4">
    <citation type="journal article" date="1997" name="Nature">
        <title>The complete genome sequence of the Gram-positive bacterium Bacillus subtilis.</title>
        <authorList>
            <person name="Kunst F."/>
            <person name="Ogasawara N."/>
            <person name="Moszer I."/>
            <person name="Albertini A.M."/>
            <person name="Alloni G."/>
            <person name="Azevedo V."/>
            <person name="Bertero M.G."/>
            <person name="Bessieres P."/>
            <person name="Bolotin A."/>
            <person name="Borchert S."/>
            <person name="Borriss R."/>
            <person name="Boursier L."/>
            <person name="Brans A."/>
            <person name="Braun M."/>
            <person name="Brignell S.C."/>
            <person name="Bron S."/>
            <person name="Brouillet S."/>
            <person name="Bruschi C.V."/>
            <person name="Caldwell B."/>
            <person name="Capuano V."/>
            <person name="Carter N.M."/>
            <person name="Choi S.-K."/>
            <person name="Codani J.-J."/>
            <person name="Connerton I.F."/>
            <person name="Cummings N.J."/>
            <person name="Daniel R.A."/>
            <person name="Denizot F."/>
            <person name="Devine K.M."/>
            <person name="Duesterhoeft A."/>
            <person name="Ehrlich S.D."/>
            <person name="Emmerson P.T."/>
            <person name="Entian K.-D."/>
            <person name="Errington J."/>
            <person name="Fabret C."/>
            <person name="Ferrari E."/>
            <person name="Foulger D."/>
            <person name="Fritz C."/>
            <person name="Fujita M."/>
            <person name="Fujita Y."/>
            <person name="Fuma S."/>
            <person name="Galizzi A."/>
            <person name="Galleron N."/>
            <person name="Ghim S.-Y."/>
            <person name="Glaser P."/>
            <person name="Goffeau A."/>
            <person name="Golightly E.J."/>
            <person name="Grandi G."/>
            <person name="Guiseppi G."/>
            <person name="Guy B.J."/>
            <person name="Haga K."/>
            <person name="Haiech J."/>
            <person name="Harwood C.R."/>
            <person name="Henaut A."/>
            <person name="Hilbert H."/>
            <person name="Holsappel S."/>
            <person name="Hosono S."/>
            <person name="Hullo M.-F."/>
            <person name="Itaya M."/>
            <person name="Jones L.-M."/>
            <person name="Joris B."/>
            <person name="Karamata D."/>
            <person name="Kasahara Y."/>
            <person name="Klaerr-Blanchard M."/>
            <person name="Klein C."/>
            <person name="Kobayashi Y."/>
            <person name="Koetter P."/>
            <person name="Koningstein G."/>
            <person name="Krogh S."/>
            <person name="Kumano M."/>
            <person name="Kurita K."/>
            <person name="Lapidus A."/>
            <person name="Lardinois S."/>
            <person name="Lauber J."/>
            <person name="Lazarevic V."/>
            <person name="Lee S.-M."/>
            <person name="Levine A."/>
            <person name="Liu H."/>
            <person name="Masuda S."/>
            <person name="Mauel C."/>
            <person name="Medigue C."/>
            <person name="Medina N."/>
            <person name="Mellado R.P."/>
            <person name="Mizuno M."/>
            <person name="Moestl D."/>
            <person name="Nakai S."/>
            <person name="Noback M."/>
            <person name="Noone D."/>
            <person name="O'Reilly M."/>
            <person name="Ogawa K."/>
            <person name="Ogiwara A."/>
            <person name="Oudega B."/>
            <person name="Park S.-H."/>
            <person name="Parro V."/>
            <person name="Pohl T.M."/>
            <person name="Portetelle D."/>
            <person name="Porwollik S."/>
            <person name="Prescott A.M."/>
            <person name="Presecan E."/>
            <person name="Pujic P."/>
            <person name="Purnelle B."/>
            <person name="Rapoport G."/>
            <person name="Rey M."/>
            <person name="Reynolds S."/>
            <person name="Rieger M."/>
            <person name="Rivolta C."/>
            <person name="Rocha E."/>
            <person name="Roche B."/>
            <person name="Rose M."/>
            <person name="Sadaie Y."/>
            <person name="Sato T."/>
            <person name="Scanlan E."/>
            <person name="Schleich S."/>
            <person name="Schroeter R."/>
            <person name="Scoffone F."/>
            <person name="Sekiguchi J."/>
            <person name="Sekowska A."/>
            <person name="Seror S.J."/>
            <person name="Serror P."/>
            <person name="Shin B.-S."/>
            <person name="Soldo B."/>
            <person name="Sorokin A."/>
            <person name="Tacconi E."/>
            <person name="Takagi T."/>
            <person name="Takahashi H."/>
            <person name="Takemaru K."/>
            <person name="Takeuchi M."/>
            <person name="Tamakoshi A."/>
            <person name="Tanaka T."/>
            <person name="Terpstra P."/>
            <person name="Tognoni A."/>
            <person name="Tosato V."/>
            <person name="Uchiyama S."/>
            <person name="Vandenbol M."/>
            <person name="Vannier F."/>
            <person name="Vassarotti A."/>
            <person name="Viari A."/>
            <person name="Wambutt R."/>
            <person name="Wedler E."/>
            <person name="Wedler H."/>
            <person name="Weitzenegger T."/>
            <person name="Winters P."/>
            <person name="Wipat A."/>
            <person name="Yamamoto H."/>
            <person name="Yamane K."/>
            <person name="Yasumoto K."/>
            <person name="Yata K."/>
            <person name="Yoshida K."/>
            <person name="Yoshikawa H.-F."/>
            <person name="Zumstein E."/>
            <person name="Yoshikawa H."/>
            <person name="Danchin A."/>
        </authorList>
    </citation>
    <scope>NUCLEOTIDE SEQUENCE [LARGE SCALE GENOMIC DNA]</scope>
    <source>
        <strain>168</strain>
    </source>
</reference>
<reference key="5">
    <citation type="journal article" date="1992" name="J. Bacteriol.">
        <title>Activation of Bacillus subtilis transcription factor sigma B by a regulatory pathway responsive to stationary-phase signals.</title>
        <authorList>
            <person name="Boylan S.A."/>
            <person name="Rutherford A."/>
            <person name="Thomas S.M."/>
            <person name="Price C.W."/>
        </authorList>
    </citation>
    <scope>FUNCTION</scope>
    <source>
        <strain>168 / Marburg / ATCC 6051 / DSM 10 / JCM 1465 / NBRC 13719 / NCIMB 3610 / NRRL NRS-744 / VKM B-501</strain>
    </source>
</reference>
<reference key="6">
    <citation type="journal article" date="1993" name="J. Bacteriol.">
        <title>Regulation of sigma B levels and activity in Bacillus subtilis.</title>
        <authorList>
            <person name="Benson A.K."/>
            <person name="Haldenwang W.G."/>
        </authorList>
    </citation>
    <scope>FUNCTION</scope>
    <source>
        <strain>PY22</strain>
    </source>
</reference>
<reference key="7">
    <citation type="journal article" date="1994" name="J. Bacteriol.">
        <title>Interactions between a Bacillus subtilis anti-sigma factor (RsbW) and its antagonist (RsbV).</title>
        <authorList>
            <person name="Dufour A."/>
            <person name="Haldenwang W.G."/>
        </authorList>
    </citation>
    <scope>FUNCTION</scope>
</reference>
<reference key="8">
    <citation type="journal article" date="1996" name="J. Bacteriol.">
        <title>Reactivation of the Bacillus subtilis anti-sigma B antagonist, RsbV, by stress- or starvation-induced phosphatase activities.</title>
        <authorList>
            <person name="Voelker U."/>
            <person name="Voelker A."/>
            <person name="Haldenwang W.G."/>
        </authorList>
    </citation>
    <scope>FUNCTION</scope>
    <source>
        <strain>PY22</strain>
    </source>
</reference>
<reference key="9">
    <citation type="journal article" date="1996" name="Genes Dev.">
        <title>Opposing pairs of serine protein kinases and phosphatases transmit signals of environmental stress to activate a bacterial transcription factor.</title>
        <authorList>
            <person name="Yang X."/>
            <person name="Kang C.M."/>
            <person name="Brody M.S."/>
            <person name="Price C.W."/>
        </authorList>
    </citation>
    <scope>MUTAGENESIS OF SER-56</scope>
    <source>
        <strain>168 / Marburg / ATCC 6051 / DSM 10 / JCM 1465 / NBRC 13719 / NCIMB 3610 / NRRL NRS-744 / VKM B-501</strain>
    </source>
</reference>
<reference key="10">
    <citation type="journal article" date="2002" name="J. Bacteriol.">
        <title>Protein-protein interactions that regulate the energy stress activation of sigma(B) in Bacillus subtilis.</title>
        <authorList>
            <person name="Delumeau O."/>
            <person name="Lewis R.J."/>
            <person name="Yudkin M.D."/>
        </authorList>
    </citation>
    <scope>SUBUNIT</scope>
    <source>
        <strain>SG38</strain>
    </source>
</reference>
<reference key="11">
    <citation type="journal article" date="2007" name="Mol. Cell. Proteomics">
        <title>The serine/threonine/tyrosine phosphoproteome of the model bacterium Bacillus subtilis.</title>
        <authorList>
            <person name="Macek B."/>
            <person name="Mijakovic I."/>
            <person name="Olsen J.V."/>
            <person name="Gnad F."/>
            <person name="Kumar C."/>
            <person name="Jensen P.R."/>
            <person name="Mann M."/>
        </authorList>
    </citation>
    <scope>PHOSPHORYLATION [LARGE SCALE ANALYSIS] AT SER-52; SER-56 AND THR-57</scope>
    <scope>IDENTIFICATION BY MASS SPECTROMETRY</scope>
    <source>
        <strain>168</strain>
    </source>
</reference>
<sequence>MNINVDVKQNENDIQVNIAGEIDVYSAPVLREKLVPLAEQGADLRICLKDVSYMDSTGLGVFVGTFKMVKKQGGSLKLENLSERLIRLFDITGLKDIIDISAKSEGGVQ</sequence>
<name>RSBV_BACSU</name>
<keyword id="KW-0002">3D-structure</keyword>
<keyword id="KW-0597">Phosphoprotein</keyword>
<keyword id="KW-1185">Reference proteome</keyword>
<accession>P17903</accession>
<gene>
    <name type="primary">rsbV</name>
    <name type="ordered locus">BSU04710</name>
</gene>
<dbReference type="EMBL" id="M34995">
    <property type="protein sequence ID" value="AAA22711.1"/>
    <property type="molecule type" value="Genomic_DNA"/>
</dbReference>
<dbReference type="EMBL" id="L35574">
    <property type="protein sequence ID" value="AAA85084.1"/>
    <property type="molecule type" value="Genomic_DNA"/>
</dbReference>
<dbReference type="EMBL" id="AB001488">
    <property type="protein sequence ID" value="BAA19308.1"/>
    <property type="molecule type" value="Genomic_DNA"/>
</dbReference>
<dbReference type="EMBL" id="AL009126">
    <property type="protein sequence ID" value="CAB12278.1"/>
    <property type="molecule type" value="Genomic_DNA"/>
</dbReference>
<dbReference type="PIR" id="A36131">
    <property type="entry name" value="A36131"/>
</dbReference>
<dbReference type="RefSeq" id="NP_388352.1">
    <property type="nucleotide sequence ID" value="NC_000964.3"/>
</dbReference>
<dbReference type="RefSeq" id="WP_003234298.1">
    <property type="nucleotide sequence ID" value="NZ_OZ025638.1"/>
</dbReference>
<dbReference type="PDB" id="6M36">
    <property type="method" value="X-ray"/>
    <property type="resolution" value="3.40 A"/>
    <property type="chains" value="B/D/F/H/J/L/N/P=2-104"/>
</dbReference>
<dbReference type="PDB" id="6M37">
    <property type="method" value="X-ray"/>
    <property type="resolution" value="3.10 A"/>
    <property type="chains" value="B/D=2-104"/>
</dbReference>
<dbReference type="PDBsum" id="6M36"/>
<dbReference type="PDBsum" id="6M37"/>
<dbReference type="SMR" id="P17903"/>
<dbReference type="BioGRID" id="857505">
    <property type="interactions" value="1"/>
</dbReference>
<dbReference type="DIP" id="DIP-92N"/>
<dbReference type="FunCoup" id="P17903">
    <property type="interactions" value="118"/>
</dbReference>
<dbReference type="IntAct" id="P17903">
    <property type="interactions" value="1"/>
</dbReference>
<dbReference type="STRING" id="224308.BSU04710"/>
<dbReference type="iPTMnet" id="P17903"/>
<dbReference type="jPOST" id="P17903"/>
<dbReference type="PaxDb" id="224308-BSU04710"/>
<dbReference type="EnsemblBacteria" id="CAB12278">
    <property type="protein sequence ID" value="CAB12278"/>
    <property type="gene ID" value="BSU_04710"/>
</dbReference>
<dbReference type="GeneID" id="939930"/>
<dbReference type="KEGG" id="bsu:BSU04710"/>
<dbReference type="PATRIC" id="fig|224308.179.peg.499"/>
<dbReference type="eggNOG" id="COG1366">
    <property type="taxonomic scope" value="Bacteria"/>
</dbReference>
<dbReference type="InParanoid" id="P17903"/>
<dbReference type="OrthoDB" id="9793697at2"/>
<dbReference type="PhylomeDB" id="P17903"/>
<dbReference type="BioCyc" id="BSUB:BSU04710-MONOMER"/>
<dbReference type="Proteomes" id="UP000001570">
    <property type="component" value="Chromosome"/>
</dbReference>
<dbReference type="GO" id="GO:0043856">
    <property type="term" value="F:anti-sigma factor antagonist activity"/>
    <property type="evidence" value="ECO:0000318"/>
    <property type="project" value="GO_Central"/>
</dbReference>
<dbReference type="CDD" id="cd07043">
    <property type="entry name" value="STAS_anti-anti-sigma_factors"/>
    <property type="match status" value="1"/>
</dbReference>
<dbReference type="FunFam" id="3.30.750.24:FF:000001">
    <property type="entry name" value="Anti-sigma factor antagonist"/>
    <property type="match status" value="1"/>
</dbReference>
<dbReference type="Gene3D" id="3.30.750.24">
    <property type="entry name" value="STAS domain"/>
    <property type="match status" value="1"/>
</dbReference>
<dbReference type="InterPro" id="IPR003658">
    <property type="entry name" value="Anti-sigma_ant"/>
</dbReference>
<dbReference type="InterPro" id="IPR002645">
    <property type="entry name" value="STAS_dom"/>
</dbReference>
<dbReference type="InterPro" id="IPR036513">
    <property type="entry name" value="STAS_dom_sf"/>
</dbReference>
<dbReference type="NCBIfam" id="TIGR00377">
    <property type="entry name" value="ant_ant_sig"/>
    <property type="match status" value="1"/>
</dbReference>
<dbReference type="PANTHER" id="PTHR33495">
    <property type="entry name" value="ANTI-SIGMA FACTOR ANTAGONIST TM_1081-RELATED-RELATED"/>
    <property type="match status" value="1"/>
</dbReference>
<dbReference type="PANTHER" id="PTHR33495:SF9">
    <property type="entry name" value="ANTI-SIGMA-B FACTOR ANTAGONIST"/>
    <property type="match status" value="1"/>
</dbReference>
<dbReference type="Pfam" id="PF01740">
    <property type="entry name" value="STAS"/>
    <property type="match status" value="1"/>
</dbReference>
<dbReference type="SUPFAM" id="SSF52091">
    <property type="entry name" value="SpoIIaa-like"/>
    <property type="match status" value="1"/>
</dbReference>
<dbReference type="PROSITE" id="PS50801">
    <property type="entry name" value="STAS"/>
    <property type="match status" value="1"/>
</dbReference>
<organism>
    <name type="scientific">Bacillus subtilis (strain 168)</name>
    <dbReference type="NCBI Taxonomy" id="224308"/>
    <lineage>
        <taxon>Bacteria</taxon>
        <taxon>Bacillati</taxon>
        <taxon>Bacillota</taxon>
        <taxon>Bacilli</taxon>
        <taxon>Bacillales</taxon>
        <taxon>Bacillaceae</taxon>
        <taxon>Bacillus</taxon>
    </lineage>
</organism>
<proteinExistence type="evidence at protein level"/>